<comment type="function">
    <text evidence="1">Catalyzes the deamination of various vicinal amino-alcohols to oxo compounds. Allows this organism to utilize ethanolamine as the sole source of nitrogen and carbon in the presence of external vitamin B12.</text>
</comment>
<comment type="catalytic activity">
    <reaction evidence="1">
        <text>ethanolamine = acetaldehyde + NH4(+)</text>
        <dbReference type="Rhea" id="RHEA:15313"/>
        <dbReference type="ChEBI" id="CHEBI:15343"/>
        <dbReference type="ChEBI" id="CHEBI:28938"/>
        <dbReference type="ChEBI" id="CHEBI:57603"/>
        <dbReference type="EC" id="4.3.1.7"/>
    </reaction>
</comment>
<comment type="cofactor">
    <cofactor evidence="1">
        <name>adenosylcob(III)alamin</name>
        <dbReference type="ChEBI" id="CHEBI:18408"/>
    </cofactor>
    <text evidence="1">Binds between the large and small subunits.</text>
</comment>
<comment type="pathway">
    <text evidence="1">Amine and polyamine degradation; ethanolamine degradation.</text>
</comment>
<comment type="subunit">
    <text evidence="1">The basic unit is a heterodimer which dimerizes to form tetramers. The heterotetramers trimerize; 6 large subunits form a core ring with 6 small subunits projecting outwards.</text>
</comment>
<comment type="subcellular location">
    <subcellularLocation>
        <location evidence="1">Bacterial microcompartment</location>
    </subcellularLocation>
</comment>
<comment type="similarity">
    <text evidence="1">Belongs to the EutC family.</text>
</comment>
<gene>
    <name evidence="1" type="primary">eutC</name>
    <name type="ordered locus">RPE_1807</name>
</gene>
<evidence type="ECO:0000255" key="1">
    <source>
        <dbReference type="HAMAP-Rule" id="MF_00601"/>
    </source>
</evidence>
<organism>
    <name type="scientific">Rhodopseudomonas palustris (strain BisA53)</name>
    <dbReference type="NCBI Taxonomy" id="316055"/>
    <lineage>
        <taxon>Bacteria</taxon>
        <taxon>Pseudomonadati</taxon>
        <taxon>Pseudomonadota</taxon>
        <taxon>Alphaproteobacteria</taxon>
        <taxon>Hyphomicrobiales</taxon>
        <taxon>Nitrobacteraceae</taxon>
        <taxon>Rhodopseudomonas</taxon>
    </lineage>
</organism>
<dbReference type="EC" id="4.3.1.7" evidence="1"/>
<dbReference type="EMBL" id="CP000463">
    <property type="protein sequence ID" value="ABJ05755.1"/>
    <property type="molecule type" value="Genomic_DNA"/>
</dbReference>
<dbReference type="SMR" id="Q07QM9"/>
<dbReference type="STRING" id="316055.RPE_1807"/>
<dbReference type="KEGG" id="rpe:RPE_1807"/>
<dbReference type="eggNOG" id="COG4302">
    <property type="taxonomic scope" value="Bacteria"/>
</dbReference>
<dbReference type="HOGENOM" id="CLU_068224_1_0_5"/>
<dbReference type="OrthoDB" id="114248at2"/>
<dbReference type="UniPathway" id="UPA00560"/>
<dbReference type="GO" id="GO:0009350">
    <property type="term" value="C:ethanolamine ammonia-lyase complex"/>
    <property type="evidence" value="ECO:0007669"/>
    <property type="project" value="UniProtKB-UniRule"/>
</dbReference>
<dbReference type="GO" id="GO:0031471">
    <property type="term" value="C:ethanolamine degradation polyhedral organelle"/>
    <property type="evidence" value="ECO:0007669"/>
    <property type="project" value="UniProtKB-UniRule"/>
</dbReference>
<dbReference type="GO" id="GO:0031419">
    <property type="term" value="F:cobalamin binding"/>
    <property type="evidence" value="ECO:0007669"/>
    <property type="project" value="UniProtKB-UniRule"/>
</dbReference>
<dbReference type="GO" id="GO:0008851">
    <property type="term" value="F:ethanolamine ammonia-lyase activity"/>
    <property type="evidence" value="ECO:0007669"/>
    <property type="project" value="UniProtKB-UniRule"/>
</dbReference>
<dbReference type="GO" id="GO:0006520">
    <property type="term" value="P:amino acid metabolic process"/>
    <property type="evidence" value="ECO:0007669"/>
    <property type="project" value="InterPro"/>
</dbReference>
<dbReference type="GO" id="GO:0046336">
    <property type="term" value="P:ethanolamine catabolic process"/>
    <property type="evidence" value="ECO:0007669"/>
    <property type="project" value="UniProtKB-UniRule"/>
</dbReference>
<dbReference type="Gene3D" id="3.40.50.11240">
    <property type="entry name" value="Ethanolamine ammonia-lyase light chain (EutC)"/>
    <property type="match status" value="1"/>
</dbReference>
<dbReference type="Gene3D" id="1.10.30.40">
    <property type="entry name" value="Ethanolamine ammonia-lyase light chain (EutC), N-terminal domain"/>
    <property type="match status" value="1"/>
</dbReference>
<dbReference type="HAMAP" id="MF_00601">
    <property type="entry name" value="EutC"/>
    <property type="match status" value="1"/>
</dbReference>
<dbReference type="InterPro" id="IPR009246">
    <property type="entry name" value="EutC"/>
</dbReference>
<dbReference type="InterPro" id="IPR042251">
    <property type="entry name" value="EutC_C"/>
</dbReference>
<dbReference type="InterPro" id="IPR042255">
    <property type="entry name" value="EutC_N"/>
</dbReference>
<dbReference type="NCBIfam" id="NF003971">
    <property type="entry name" value="PRK05465.1"/>
    <property type="match status" value="1"/>
</dbReference>
<dbReference type="PANTHER" id="PTHR39330">
    <property type="entry name" value="ETHANOLAMINE AMMONIA-LYASE LIGHT CHAIN"/>
    <property type="match status" value="1"/>
</dbReference>
<dbReference type="PANTHER" id="PTHR39330:SF1">
    <property type="entry name" value="ETHANOLAMINE AMMONIA-LYASE SMALL SUBUNIT"/>
    <property type="match status" value="1"/>
</dbReference>
<dbReference type="Pfam" id="PF05985">
    <property type="entry name" value="EutC"/>
    <property type="match status" value="1"/>
</dbReference>
<dbReference type="PIRSF" id="PIRSF018982">
    <property type="entry name" value="EutC"/>
    <property type="match status" value="1"/>
</dbReference>
<accession>Q07QM9</accession>
<sequence>MTKPTPTIHSLRDLRRLTPARVGLGRSGASVPTKALLDFTLDHARARDAVHASFDGAALTGELSALGLAVHEVRSRVRGRHDYLVRPDLGRQLDPESRDRLAGIGGPGGDLVLVIGDGLSPGAVHARAAAVVGRLLKRLTEAGIAVGPAVVANGARVALGDEIGALLGARMVAVLIGERPGLSSPASLGAYLTYAPRPGLTDAERNCVSNIHPAGLSEDEAAFKIGWLIREALARRLSGVALKDDSMLEAATAARELSAPG</sequence>
<feature type="chain" id="PRO_1000025863" description="Ethanolamine ammonia-lyase small subunit">
    <location>
        <begin position="1"/>
        <end position="261"/>
    </location>
</feature>
<feature type="binding site" evidence="1">
    <location>
        <position position="157"/>
    </location>
    <ligand>
        <name>adenosylcob(III)alamin</name>
        <dbReference type="ChEBI" id="CHEBI:18408"/>
    </ligand>
</feature>
<feature type="binding site" evidence="1">
    <location>
        <position position="178"/>
    </location>
    <ligand>
        <name>adenosylcob(III)alamin</name>
        <dbReference type="ChEBI" id="CHEBI:18408"/>
    </ligand>
</feature>
<feature type="binding site" evidence="1">
    <location>
        <position position="207"/>
    </location>
    <ligand>
        <name>adenosylcob(III)alamin</name>
        <dbReference type="ChEBI" id="CHEBI:18408"/>
    </ligand>
</feature>
<reference key="1">
    <citation type="submission" date="2006-09" db="EMBL/GenBank/DDBJ databases">
        <title>Complete sequence of Rhodopseudomonas palustris BisA53.</title>
        <authorList>
            <consortium name="US DOE Joint Genome Institute"/>
            <person name="Copeland A."/>
            <person name="Lucas S."/>
            <person name="Lapidus A."/>
            <person name="Barry K."/>
            <person name="Detter J.C."/>
            <person name="Glavina del Rio T."/>
            <person name="Hammon N."/>
            <person name="Israni S."/>
            <person name="Dalin E."/>
            <person name="Tice H."/>
            <person name="Pitluck S."/>
            <person name="Chain P."/>
            <person name="Malfatti S."/>
            <person name="Shin M."/>
            <person name="Vergez L."/>
            <person name="Schmutz J."/>
            <person name="Larimer F."/>
            <person name="Land M."/>
            <person name="Hauser L."/>
            <person name="Pelletier D.A."/>
            <person name="Kyrpides N."/>
            <person name="Kim E."/>
            <person name="Harwood C.S."/>
            <person name="Oda Y."/>
            <person name="Richardson P."/>
        </authorList>
    </citation>
    <scope>NUCLEOTIDE SEQUENCE [LARGE SCALE GENOMIC DNA]</scope>
    <source>
        <strain>BisA53</strain>
    </source>
</reference>
<protein>
    <recommendedName>
        <fullName evidence="1">Ethanolamine ammonia-lyase small subunit</fullName>
        <shortName evidence="1">EAL small subunit</shortName>
        <ecNumber evidence="1">4.3.1.7</ecNumber>
    </recommendedName>
</protein>
<name>EUTC_RHOP5</name>
<proteinExistence type="inferred from homology"/>
<keyword id="KW-1283">Bacterial microcompartment</keyword>
<keyword id="KW-0846">Cobalamin</keyword>
<keyword id="KW-0170">Cobalt</keyword>
<keyword id="KW-0456">Lyase</keyword>